<keyword id="KW-1003">Cell membrane</keyword>
<keyword id="KW-1015">Disulfide bond</keyword>
<keyword id="KW-0297">G-protein coupled receptor</keyword>
<keyword id="KW-0325">Glycoprotein</keyword>
<keyword id="KW-0472">Membrane</keyword>
<keyword id="KW-0597">Phosphoprotein</keyword>
<keyword id="KW-0675">Receptor</keyword>
<keyword id="KW-1185">Reference proteome</keyword>
<keyword id="KW-0807">Transducer</keyword>
<keyword id="KW-0812">Transmembrane</keyword>
<keyword id="KW-1133">Transmembrane helix</keyword>
<gene>
    <name type="primary">GNRHR2</name>
</gene>
<reference key="1">
    <citation type="journal article" date="2001" name="Proc. Natl. Acad. Sci. U.S.A.">
        <title>A novel mammalian receptor for the evolutionarily conserved type II GnRH.</title>
        <authorList>
            <person name="Millar R."/>
            <person name="Lowe S."/>
            <person name="Conklin D."/>
            <person name="Pawson A."/>
            <person name="Maudsley S."/>
            <person name="Troskie B."/>
            <person name="Ott T."/>
            <person name="Millar M."/>
            <person name="Lincoln G."/>
            <person name="Sellar R."/>
            <person name="Faurholm B."/>
            <person name="Scobie G."/>
            <person name="Kuestner R."/>
            <person name="Terasawa E."/>
            <person name="Katz A."/>
        </authorList>
    </citation>
    <scope>NUCLEOTIDE SEQUENCE [MRNA]</scope>
</reference>
<sequence>MSAVNGTPWGSSAREEVWAGSGVEVEGSELPTFSTAAKVRVGVTIVLFVSSAGGNLAVLWSVTRPQPSQLRPSPVRRLFAHLAAADLLVTFVVMPLDATWNITVQWLAGDIACRTLMFLKLMAMYAAAFLPVVIGLDRQAAVLNPLGSRSGVRKLLGAAWGLSFLLALPQLFLFHTVHRAGPVPFTQCATKGSFKARWQETTYNLFTFCCLFLLPLTAMAICYSRIVLGVSSPRTRKGSHAPAGEFALRRSFDNRPRVRLRALRLALLVLLTFILCWTPYYLLGLWYWFSPSMLSEVPPSLSHILFLFGLLNAPLDPLLYGAFTLGCRRGHQELSMDSSREEGSRRMFQQDIQALRQTEVQKTVTSRKAGETKDIPITSI</sequence>
<name>GNRR2_CALJA</name>
<comment type="function">
    <text>Receptor for gonadotropin releasing hormone II (GnRH II). This receptor mediates its action by association with G proteins that activate a phosphatidylinositol-calcium second messenger system.</text>
</comment>
<comment type="subcellular location">
    <subcellularLocation>
        <location>Cell membrane</location>
        <topology>Multi-pass membrane protein</topology>
    </subcellularLocation>
</comment>
<comment type="PTM">
    <text evidence="3">Phosphorylated on the C-terminal cytoplasmic tail.</text>
</comment>
<comment type="similarity">
    <text evidence="2">Belongs to the G-protein coupled receptor 1 family.</text>
</comment>
<organism>
    <name type="scientific">Callithrix jacchus</name>
    <name type="common">White-tufted-ear marmoset</name>
    <dbReference type="NCBI Taxonomy" id="9483"/>
    <lineage>
        <taxon>Eukaryota</taxon>
        <taxon>Metazoa</taxon>
        <taxon>Chordata</taxon>
        <taxon>Craniata</taxon>
        <taxon>Vertebrata</taxon>
        <taxon>Euteleostomi</taxon>
        <taxon>Mammalia</taxon>
        <taxon>Eutheria</taxon>
        <taxon>Euarchontoglires</taxon>
        <taxon>Primates</taxon>
        <taxon>Haplorrhini</taxon>
        <taxon>Platyrrhini</taxon>
        <taxon>Cebidae</taxon>
        <taxon>Callitrichinae</taxon>
        <taxon>Callithrix</taxon>
        <taxon>Callithrix</taxon>
    </lineage>
</organism>
<protein>
    <recommendedName>
        <fullName>Gonadotropin-releasing hormone II receptor</fullName>
        <shortName>GnRH II receptor</shortName>
        <shortName>GnRH-II-R</shortName>
    </recommendedName>
    <alternativeName>
        <fullName>Type II GnRH receptor</fullName>
    </alternativeName>
</protein>
<proteinExistence type="evidence at transcript level"/>
<accession>Q95MG6</accession>
<evidence type="ECO:0000255" key="1"/>
<evidence type="ECO:0000255" key="2">
    <source>
        <dbReference type="PROSITE-ProRule" id="PRU00521"/>
    </source>
</evidence>
<evidence type="ECO:0000305" key="3"/>
<feature type="chain" id="PRO_0000069494" description="Gonadotropin-releasing hormone II receptor">
    <location>
        <begin position="1"/>
        <end position="380"/>
    </location>
</feature>
<feature type="topological domain" description="Extracellular" evidence="1">
    <location>
        <begin position="1"/>
        <end position="40"/>
    </location>
</feature>
<feature type="transmembrane region" description="Helical; Name=1" evidence="1">
    <location>
        <begin position="41"/>
        <end position="60"/>
    </location>
</feature>
<feature type="topological domain" description="Cytoplasmic" evidence="1">
    <location>
        <begin position="61"/>
        <end position="76"/>
    </location>
</feature>
<feature type="transmembrane region" description="Helical; Name=2" evidence="1">
    <location>
        <begin position="77"/>
        <end position="96"/>
    </location>
</feature>
<feature type="topological domain" description="Extracellular" evidence="1">
    <location>
        <begin position="97"/>
        <end position="114"/>
    </location>
</feature>
<feature type="transmembrane region" description="Helical; Name=3" evidence="1">
    <location>
        <begin position="115"/>
        <end position="136"/>
    </location>
</feature>
<feature type="topological domain" description="Cytoplasmic" evidence="1">
    <location>
        <begin position="137"/>
        <end position="160"/>
    </location>
</feature>
<feature type="transmembrane region" description="Helical; Name=4" evidence="1">
    <location>
        <begin position="161"/>
        <end position="178"/>
    </location>
</feature>
<feature type="topological domain" description="Extracellular" evidence="1">
    <location>
        <begin position="179"/>
        <end position="204"/>
    </location>
</feature>
<feature type="transmembrane region" description="Helical; Name=5" evidence="1">
    <location>
        <begin position="205"/>
        <end position="224"/>
    </location>
</feature>
<feature type="topological domain" description="Cytoplasmic" evidence="1">
    <location>
        <begin position="225"/>
        <end position="278"/>
    </location>
</feature>
<feature type="transmembrane region" description="Helical; Name=6" evidence="1">
    <location>
        <begin position="279"/>
        <end position="297"/>
    </location>
</feature>
<feature type="topological domain" description="Extracellular" evidence="1">
    <location>
        <begin position="298"/>
        <end position="303"/>
    </location>
</feature>
<feature type="transmembrane region" description="Helical; Name=7" evidence="1">
    <location>
        <begin position="304"/>
        <end position="323"/>
    </location>
</feature>
<feature type="topological domain" description="Cytoplasmic" evidence="1">
    <location>
        <begin position="324"/>
        <end position="380"/>
    </location>
</feature>
<feature type="glycosylation site" description="N-linked (GlcNAc...) asparagine" evidence="1">
    <location>
        <position position="101"/>
    </location>
</feature>
<feature type="disulfide bond" evidence="2">
    <location>
        <begin position="113"/>
        <end position="188"/>
    </location>
</feature>
<dbReference type="EMBL" id="AF368286">
    <property type="protein sequence ID" value="AAK60927.1"/>
    <property type="molecule type" value="mRNA"/>
</dbReference>
<dbReference type="RefSeq" id="NP_001254688.1">
    <property type="nucleotide sequence ID" value="NM_001267759.1"/>
</dbReference>
<dbReference type="SMR" id="Q95MG6"/>
<dbReference type="FunCoup" id="Q95MG6">
    <property type="interactions" value="509"/>
</dbReference>
<dbReference type="STRING" id="9483.ENSCJAP00000050460"/>
<dbReference type="GlyCosmos" id="Q95MG6">
    <property type="glycosylation" value="1 site, No reported glycans"/>
</dbReference>
<dbReference type="iPTMnet" id="Q95MG6"/>
<dbReference type="GeneID" id="100399755"/>
<dbReference type="KEGG" id="cjc:100399755"/>
<dbReference type="CTD" id="114814"/>
<dbReference type="eggNOG" id="KOG3656">
    <property type="taxonomic scope" value="Eukaryota"/>
</dbReference>
<dbReference type="InParanoid" id="Q95MG6"/>
<dbReference type="OrthoDB" id="6022667at2759"/>
<dbReference type="Proteomes" id="UP000008225">
    <property type="component" value="Unplaced"/>
</dbReference>
<dbReference type="GO" id="GO:0005886">
    <property type="term" value="C:plasma membrane"/>
    <property type="evidence" value="ECO:0007669"/>
    <property type="project" value="UniProtKB-SubCell"/>
</dbReference>
<dbReference type="GO" id="GO:0004930">
    <property type="term" value="F:G protein-coupled receptor activity"/>
    <property type="evidence" value="ECO:0007669"/>
    <property type="project" value="UniProtKB-KW"/>
</dbReference>
<dbReference type="GO" id="GO:0042277">
    <property type="term" value="F:peptide binding"/>
    <property type="evidence" value="ECO:0007669"/>
    <property type="project" value="TreeGrafter"/>
</dbReference>
<dbReference type="GO" id="GO:0016500">
    <property type="term" value="F:protein-hormone receptor activity"/>
    <property type="evidence" value="ECO:0007669"/>
    <property type="project" value="InterPro"/>
</dbReference>
<dbReference type="GO" id="GO:0032870">
    <property type="term" value="P:cellular response to hormone stimulus"/>
    <property type="evidence" value="ECO:0007669"/>
    <property type="project" value="TreeGrafter"/>
</dbReference>
<dbReference type="FunFam" id="1.20.1070.10:FF:000199">
    <property type="entry name" value="Gonadotropin-releasing hormone II receptor"/>
    <property type="match status" value="1"/>
</dbReference>
<dbReference type="Gene3D" id="1.20.1070.10">
    <property type="entry name" value="Rhodopsin 7-helix transmembrane proteins"/>
    <property type="match status" value="1"/>
</dbReference>
<dbReference type="InterPro" id="IPR000276">
    <property type="entry name" value="GPCR_Rhodpsn"/>
</dbReference>
<dbReference type="InterPro" id="IPR017452">
    <property type="entry name" value="GPCR_Rhodpsn_7TM"/>
</dbReference>
<dbReference type="InterPro" id="IPR001658">
    <property type="entry name" value="GphnRH_fam_rcpt"/>
</dbReference>
<dbReference type="PANTHER" id="PTHR24241:SF69">
    <property type="entry name" value="GONADOTROPIN-RELEASING HORMONE II RECEPTOR-RELATED"/>
    <property type="match status" value="1"/>
</dbReference>
<dbReference type="PANTHER" id="PTHR24241">
    <property type="entry name" value="NEUROPEPTIDE RECEPTOR-RELATED G-PROTEIN COUPLED RECEPTOR"/>
    <property type="match status" value="1"/>
</dbReference>
<dbReference type="Pfam" id="PF00001">
    <property type="entry name" value="7tm_1"/>
    <property type="match status" value="1"/>
</dbReference>
<dbReference type="PRINTS" id="PR00529">
    <property type="entry name" value="GNADOTRPHINR"/>
</dbReference>
<dbReference type="PRINTS" id="PR00237">
    <property type="entry name" value="GPCRRHODOPSN"/>
</dbReference>
<dbReference type="SUPFAM" id="SSF81321">
    <property type="entry name" value="Family A G protein-coupled receptor-like"/>
    <property type="match status" value="1"/>
</dbReference>
<dbReference type="PROSITE" id="PS50262">
    <property type="entry name" value="G_PROTEIN_RECEP_F1_2"/>
    <property type="match status" value="1"/>
</dbReference>